<evidence type="ECO:0000250" key="1"/>
<evidence type="ECO:0000255" key="2"/>
<evidence type="ECO:0000303" key="3">
    <source>
    </source>
</evidence>
<evidence type="ECO:0000305" key="4"/>
<feature type="signal peptide" evidence="2">
    <location>
        <begin position="1"/>
        <end position="33"/>
    </location>
</feature>
<feature type="chain" id="PRO_0000045770" description="BMP/retinoic acid-inducible neural-specific protein 2">
    <location>
        <begin position="34"/>
        <end position="783"/>
    </location>
</feature>
<feature type="domain" description="MACPF">
    <location>
        <begin position="85"/>
        <end position="281"/>
    </location>
</feature>
<feature type="glycosylation site" description="N-linked (GlcNAc...) asparagine" evidence="2">
    <location>
        <position position="185"/>
    </location>
</feature>
<feature type="glycosylation site" description="N-linked (GlcNAc...) asparagine" evidence="2">
    <location>
        <position position="354"/>
    </location>
</feature>
<feature type="glycosylation site" description="N-linked (GlcNAc...) asparagine" evidence="2">
    <location>
        <position position="473"/>
    </location>
</feature>
<feature type="glycosylation site" description="N-linked (GlcNAc...) asparagine" evidence="2">
    <location>
        <position position="579"/>
    </location>
</feature>
<feature type="glycosylation site" description="N-linked (GlcNAc...) asparagine" evidence="2">
    <location>
        <position position="626"/>
    </location>
</feature>
<feature type="glycosylation site" description="N-linked (GlcNAc...) asparagine" evidence="2">
    <location>
        <position position="658"/>
    </location>
</feature>
<feature type="splice variant" id="VSP_017026" description="In isoform 2." evidence="3">
    <original>MRWQCGTRFRGLRPAVAPWTALLALGLPGWVLAVSATAAAVVPEQHASVAGQHPLDWLLTDRGPFHRAQEYADFMERYRQGFTTRYRIYREFARWKVNNLALERKDFFSLPLPLAPEFIRNIRLLGRRPNLQQVTENLIKKYGTHFLLSATLG</original>
    <variation>MVRAGGRAWQQGLHSLSAVSILAKGFMFLLVGDSRAESVTNTLVLFTI</variation>
    <location>
        <begin position="1"/>
        <end position="153"/>
    </location>
</feature>
<feature type="sequence variant" id="VAR_049022" description="In dbSNP:rs16850984.">
    <original>Y</original>
    <variation>C</variation>
    <location>
        <position position="71"/>
    </location>
</feature>
<feature type="sequence variant" id="VAR_049023" description="In dbSNP:rs3176443.">
    <original>L</original>
    <variation>V</variation>
    <location>
        <position position="390"/>
    </location>
</feature>
<name>BRNP2_HUMAN</name>
<comment type="function">
    <text evidence="1">Inhibits neuronal cell proliferation by negative regulation of the cell cycle transition.</text>
</comment>
<comment type="subcellular location">
    <subcellularLocation>
        <location evidence="4">Secreted</location>
    </subcellularLocation>
</comment>
<comment type="alternative products">
    <event type="alternative splicing"/>
    <isoform>
        <id>Q9C0B6-1</id>
        <name>1</name>
        <sequence type="displayed"/>
    </isoform>
    <isoform>
        <id>Q9C0B6-2</id>
        <name>2</name>
        <sequence type="described" ref="VSP_017026"/>
    </isoform>
</comment>
<comment type="similarity">
    <text evidence="4">Belongs to the BRINP family.</text>
</comment>
<comment type="sequence caution" evidence="4">
    <conflict type="erroneous initiation">
        <sequence resource="EMBL-CDS" id="BAB21838"/>
    </conflict>
    <text>Extended N-terminus.</text>
</comment>
<organism>
    <name type="scientific">Homo sapiens</name>
    <name type="common">Human</name>
    <dbReference type="NCBI Taxonomy" id="9606"/>
    <lineage>
        <taxon>Eukaryota</taxon>
        <taxon>Metazoa</taxon>
        <taxon>Chordata</taxon>
        <taxon>Craniata</taxon>
        <taxon>Vertebrata</taxon>
        <taxon>Euteleostomi</taxon>
        <taxon>Mammalia</taxon>
        <taxon>Eutheria</taxon>
        <taxon>Euarchontoglires</taxon>
        <taxon>Primates</taxon>
        <taxon>Haplorrhini</taxon>
        <taxon>Catarrhini</taxon>
        <taxon>Hominidae</taxon>
        <taxon>Homo</taxon>
    </lineage>
</organism>
<dbReference type="EMBL" id="AB161694">
    <property type="protein sequence ID" value="BAD34946.1"/>
    <property type="molecule type" value="mRNA"/>
</dbReference>
<dbReference type="EMBL" id="AB051534">
    <property type="protein sequence ID" value="BAB21838.1"/>
    <property type="status" value="ALT_INIT"/>
    <property type="molecule type" value="mRNA"/>
</dbReference>
<dbReference type="EMBL" id="AK123336">
    <property type="protein sequence ID" value="BAC85583.1"/>
    <property type="molecule type" value="mRNA"/>
</dbReference>
<dbReference type="EMBL" id="AL022143">
    <property type="status" value="NOT_ANNOTATED_CDS"/>
    <property type="molecule type" value="Genomic_DNA"/>
</dbReference>
<dbReference type="EMBL" id="BC028036">
    <property type="protein sequence ID" value="AAH28036.1"/>
    <property type="molecule type" value="mRNA"/>
</dbReference>
<dbReference type="EMBL" id="AL035289">
    <property type="protein sequence ID" value="CAA22893.1"/>
    <property type="molecule type" value="mRNA"/>
</dbReference>
<dbReference type="EMBL" id="AF131833">
    <property type="protein sequence ID" value="AAD20055.1"/>
    <property type="molecule type" value="mRNA"/>
</dbReference>
<dbReference type="CCDS" id="CCDS1320.1">
    <molecule id="Q9C0B6-1"/>
</dbReference>
<dbReference type="RefSeq" id="NP_066988.1">
    <molecule id="Q9C0B6-1"/>
    <property type="nucleotide sequence ID" value="NM_021165.4"/>
</dbReference>
<dbReference type="RefSeq" id="XP_005245436.1">
    <molecule id="Q9C0B6-1"/>
    <property type="nucleotide sequence ID" value="XM_005245379.3"/>
</dbReference>
<dbReference type="RefSeq" id="XP_024304490.1">
    <molecule id="Q9C0B6-1"/>
    <property type="nucleotide sequence ID" value="XM_024448722.2"/>
</dbReference>
<dbReference type="BioGRID" id="121768">
    <property type="interactions" value="38"/>
</dbReference>
<dbReference type="FunCoup" id="Q9C0B6">
    <property type="interactions" value="79"/>
</dbReference>
<dbReference type="IntAct" id="Q9C0B6">
    <property type="interactions" value="25"/>
</dbReference>
<dbReference type="MINT" id="Q9C0B6"/>
<dbReference type="STRING" id="9606.ENSP00000354481"/>
<dbReference type="TCDB" id="1.C.39.17.2">
    <property type="family name" value="the membrane attack complex/perforin (macpf) family"/>
</dbReference>
<dbReference type="GlyCosmos" id="Q9C0B6">
    <property type="glycosylation" value="6 sites, No reported glycans"/>
</dbReference>
<dbReference type="GlyGen" id="Q9C0B6">
    <property type="glycosylation" value="6 sites"/>
</dbReference>
<dbReference type="iPTMnet" id="Q9C0B6"/>
<dbReference type="PhosphoSitePlus" id="Q9C0B6"/>
<dbReference type="BioMuta" id="BRINP2"/>
<dbReference type="DMDM" id="85700961"/>
<dbReference type="jPOST" id="Q9C0B6"/>
<dbReference type="MassIVE" id="Q9C0B6"/>
<dbReference type="PaxDb" id="9606-ENSP00000354481"/>
<dbReference type="PeptideAtlas" id="Q9C0B6"/>
<dbReference type="ProteomicsDB" id="79991">
    <molecule id="Q9C0B6-1"/>
</dbReference>
<dbReference type="ProteomicsDB" id="79992">
    <molecule id="Q9C0B6-2"/>
</dbReference>
<dbReference type="Antibodypedia" id="55637">
    <property type="antibodies" value="31 antibodies from 9 providers"/>
</dbReference>
<dbReference type="DNASU" id="57795"/>
<dbReference type="Ensembl" id="ENST00000361539.5">
    <molecule id="Q9C0B6-1"/>
    <property type="protein sequence ID" value="ENSP00000354481.4"/>
    <property type="gene ID" value="ENSG00000198797.7"/>
</dbReference>
<dbReference type="GeneID" id="57795"/>
<dbReference type="KEGG" id="hsa:57795"/>
<dbReference type="MANE-Select" id="ENST00000361539.5">
    <property type="protein sequence ID" value="ENSP00000354481.4"/>
    <property type="RefSeq nucleotide sequence ID" value="NM_021165.4"/>
    <property type="RefSeq protein sequence ID" value="NP_066988.1"/>
</dbReference>
<dbReference type="UCSC" id="uc001glf.3">
    <molecule id="Q9C0B6-1"/>
    <property type="organism name" value="human"/>
</dbReference>
<dbReference type="AGR" id="HGNC:13746"/>
<dbReference type="CTD" id="57795"/>
<dbReference type="DisGeNET" id="57795"/>
<dbReference type="GeneCards" id="BRINP2"/>
<dbReference type="HGNC" id="HGNC:13746">
    <property type="gene designation" value="BRINP2"/>
</dbReference>
<dbReference type="HPA" id="ENSG00000198797">
    <property type="expression patterns" value="Group enriched (adrenal gland, brain)"/>
</dbReference>
<dbReference type="MIM" id="619359">
    <property type="type" value="gene"/>
</dbReference>
<dbReference type="neXtProt" id="NX_Q9C0B6"/>
<dbReference type="OpenTargets" id="ENSG00000198797"/>
<dbReference type="PharmGKB" id="PA142671895"/>
<dbReference type="VEuPathDB" id="HostDB:ENSG00000198797"/>
<dbReference type="eggNOG" id="ENOG502QQZS">
    <property type="taxonomic scope" value="Eukaryota"/>
</dbReference>
<dbReference type="GeneTree" id="ENSGT00940000160314"/>
<dbReference type="HOGENOM" id="CLU_018347_0_0_1"/>
<dbReference type="InParanoid" id="Q9C0B6"/>
<dbReference type="OMA" id="LSACCRW"/>
<dbReference type="OrthoDB" id="10013872at2759"/>
<dbReference type="PAN-GO" id="Q9C0B6">
    <property type="GO annotations" value="6 GO annotations based on evolutionary models"/>
</dbReference>
<dbReference type="PhylomeDB" id="Q9C0B6"/>
<dbReference type="TreeFam" id="TF331600"/>
<dbReference type="PathwayCommons" id="Q9C0B6"/>
<dbReference type="SignaLink" id="Q9C0B6"/>
<dbReference type="BioGRID-ORCS" id="57795">
    <property type="hits" value="11 hits in 1129 CRISPR screens"/>
</dbReference>
<dbReference type="ChiTaRS" id="BRINP2">
    <property type="organism name" value="human"/>
</dbReference>
<dbReference type="GenomeRNAi" id="57795"/>
<dbReference type="Pharos" id="Q9C0B6">
    <property type="development level" value="Tdark"/>
</dbReference>
<dbReference type="PRO" id="PR:Q9C0B6"/>
<dbReference type="Proteomes" id="UP000005640">
    <property type="component" value="Chromosome 1"/>
</dbReference>
<dbReference type="RNAct" id="Q9C0B6">
    <property type="molecule type" value="protein"/>
</dbReference>
<dbReference type="Bgee" id="ENSG00000198797">
    <property type="expression patterns" value="Expressed in right frontal lobe and 114 other cell types or tissues"/>
</dbReference>
<dbReference type="GO" id="GO:0005737">
    <property type="term" value="C:cytoplasm"/>
    <property type="evidence" value="ECO:0000318"/>
    <property type="project" value="GO_Central"/>
</dbReference>
<dbReference type="GO" id="GO:0030425">
    <property type="term" value="C:dendrite"/>
    <property type="evidence" value="ECO:0000318"/>
    <property type="project" value="GO_Central"/>
</dbReference>
<dbReference type="GO" id="GO:0005576">
    <property type="term" value="C:extracellular region"/>
    <property type="evidence" value="ECO:0007669"/>
    <property type="project" value="UniProtKB-SubCell"/>
</dbReference>
<dbReference type="GO" id="GO:0043025">
    <property type="term" value="C:neuronal cell body"/>
    <property type="evidence" value="ECO:0000318"/>
    <property type="project" value="GO_Central"/>
</dbReference>
<dbReference type="GO" id="GO:0071300">
    <property type="term" value="P:cellular response to retinoic acid"/>
    <property type="evidence" value="ECO:0000318"/>
    <property type="project" value="GO_Central"/>
</dbReference>
<dbReference type="GO" id="GO:0021953">
    <property type="term" value="P:central nervous system neuron differentiation"/>
    <property type="evidence" value="ECO:0000318"/>
    <property type="project" value="GO_Central"/>
</dbReference>
<dbReference type="GO" id="GO:0040011">
    <property type="term" value="P:locomotion"/>
    <property type="evidence" value="ECO:0007669"/>
    <property type="project" value="Ensembl"/>
</dbReference>
<dbReference type="GO" id="GO:0035264">
    <property type="term" value="P:multicellular organism growth"/>
    <property type="evidence" value="ECO:0007669"/>
    <property type="project" value="Ensembl"/>
</dbReference>
<dbReference type="GO" id="GO:0045930">
    <property type="term" value="P:negative regulation of mitotic cell cycle"/>
    <property type="evidence" value="ECO:0000318"/>
    <property type="project" value="GO_Central"/>
</dbReference>
<dbReference type="GO" id="GO:0045666">
    <property type="term" value="P:positive regulation of neuron differentiation"/>
    <property type="evidence" value="ECO:0007669"/>
    <property type="project" value="InterPro"/>
</dbReference>
<dbReference type="InterPro" id="IPR033237">
    <property type="entry name" value="BRINP"/>
</dbReference>
<dbReference type="InterPro" id="IPR020864">
    <property type="entry name" value="MACPF"/>
</dbReference>
<dbReference type="PANTHER" id="PTHR15564:SF8">
    <property type="entry name" value="BMP_RETINOIC ACID-INDUCIBLE NEURAL-SPECIFIC PROTEIN 2"/>
    <property type="match status" value="1"/>
</dbReference>
<dbReference type="PANTHER" id="PTHR15564">
    <property type="entry name" value="MACPF DOMAIN-CONTAINING PROTEIN"/>
    <property type="match status" value="1"/>
</dbReference>
<dbReference type="Pfam" id="PF19052">
    <property type="entry name" value="BRINP"/>
    <property type="match status" value="1"/>
</dbReference>
<dbReference type="Pfam" id="PF25415">
    <property type="entry name" value="EGF_BRNP1-3"/>
    <property type="match status" value="1"/>
</dbReference>
<dbReference type="Pfam" id="PF01823">
    <property type="entry name" value="MACPF"/>
    <property type="match status" value="1"/>
</dbReference>
<dbReference type="SMART" id="SM00457">
    <property type="entry name" value="MACPF"/>
    <property type="match status" value="1"/>
</dbReference>
<gene>
    <name type="primary">BRINP2</name>
    <name type="synonym">DBCCR1L2</name>
    <name type="synonym">FAM5B</name>
    <name type="synonym">KIAA1747</name>
</gene>
<protein>
    <recommendedName>
        <fullName>BMP/retinoic acid-inducible neural-specific protein 2</fullName>
    </recommendedName>
    <alternativeName>
        <fullName>DBCCR1-like protein 2</fullName>
    </alternativeName>
</protein>
<accession>Q9C0B6</accession>
<accession>O95560</accession>
<accession>Q6ZWC1</accession>
<accession>Q7LCZ9</accession>
<accession>Q8N360</accession>
<reference key="1">
    <citation type="submission" date="2004-02" db="EMBL/GenBank/DDBJ databases">
        <title>Homo sapiens DBCCR1L2 mRNA for DBCCR1-like 2.</title>
        <authorList>
            <person name="Inazawa J."/>
            <person name="Imoto I."/>
        </authorList>
    </citation>
    <scope>NUCLEOTIDE SEQUENCE [MRNA] (ISOFORM 1)</scope>
</reference>
<reference key="2">
    <citation type="journal article" date="2000" name="DNA Res.">
        <title>Prediction of the coding sequences of unidentified human genes. XIX. The complete sequences of 100 new cDNA clones from brain which code for large proteins in vitro.</title>
        <authorList>
            <person name="Nagase T."/>
            <person name="Kikuno R."/>
            <person name="Hattori A."/>
            <person name="Kondo Y."/>
            <person name="Okumura K."/>
            <person name="Ohara O."/>
        </authorList>
    </citation>
    <scope>NUCLEOTIDE SEQUENCE [LARGE SCALE MRNA] (ISOFORM 1)</scope>
    <source>
        <tissue>Brain</tissue>
    </source>
</reference>
<reference key="3">
    <citation type="journal article" date="2004" name="Nat. Genet.">
        <title>Complete sequencing and characterization of 21,243 full-length human cDNAs.</title>
        <authorList>
            <person name="Ota T."/>
            <person name="Suzuki Y."/>
            <person name="Nishikawa T."/>
            <person name="Otsuki T."/>
            <person name="Sugiyama T."/>
            <person name="Irie R."/>
            <person name="Wakamatsu A."/>
            <person name="Hayashi K."/>
            <person name="Sato H."/>
            <person name="Nagai K."/>
            <person name="Kimura K."/>
            <person name="Makita H."/>
            <person name="Sekine M."/>
            <person name="Obayashi M."/>
            <person name="Nishi T."/>
            <person name="Shibahara T."/>
            <person name="Tanaka T."/>
            <person name="Ishii S."/>
            <person name="Yamamoto J."/>
            <person name="Saito K."/>
            <person name="Kawai Y."/>
            <person name="Isono Y."/>
            <person name="Nakamura Y."/>
            <person name="Nagahari K."/>
            <person name="Murakami K."/>
            <person name="Yasuda T."/>
            <person name="Iwayanagi T."/>
            <person name="Wagatsuma M."/>
            <person name="Shiratori A."/>
            <person name="Sudo H."/>
            <person name="Hosoiri T."/>
            <person name="Kaku Y."/>
            <person name="Kodaira H."/>
            <person name="Kondo H."/>
            <person name="Sugawara M."/>
            <person name="Takahashi M."/>
            <person name="Kanda K."/>
            <person name="Yokoi T."/>
            <person name="Furuya T."/>
            <person name="Kikkawa E."/>
            <person name="Omura Y."/>
            <person name="Abe K."/>
            <person name="Kamihara K."/>
            <person name="Katsuta N."/>
            <person name="Sato K."/>
            <person name="Tanikawa M."/>
            <person name="Yamazaki M."/>
            <person name="Ninomiya K."/>
            <person name="Ishibashi T."/>
            <person name="Yamashita H."/>
            <person name="Murakawa K."/>
            <person name="Fujimori K."/>
            <person name="Tanai H."/>
            <person name="Kimata M."/>
            <person name="Watanabe M."/>
            <person name="Hiraoka S."/>
            <person name="Chiba Y."/>
            <person name="Ishida S."/>
            <person name="Ono Y."/>
            <person name="Takiguchi S."/>
            <person name="Watanabe S."/>
            <person name="Yosida M."/>
            <person name="Hotuta T."/>
            <person name="Kusano J."/>
            <person name="Kanehori K."/>
            <person name="Takahashi-Fujii A."/>
            <person name="Hara H."/>
            <person name="Tanase T.-O."/>
            <person name="Nomura Y."/>
            <person name="Togiya S."/>
            <person name="Komai F."/>
            <person name="Hara R."/>
            <person name="Takeuchi K."/>
            <person name="Arita M."/>
            <person name="Imose N."/>
            <person name="Musashino K."/>
            <person name="Yuuki H."/>
            <person name="Oshima A."/>
            <person name="Sasaki N."/>
            <person name="Aotsuka S."/>
            <person name="Yoshikawa Y."/>
            <person name="Matsunawa H."/>
            <person name="Ichihara T."/>
            <person name="Shiohata N."/>
            <person name="Sano S."/>
            <person name="Moriya S."/>
            <person name="Momiyama H."/>
            <person name="Satoh N."/>
            <person name="Takami S."/>
            <person name="Terashima Y."/>
            <person name="Suzuki O."/>
            <person name="Nakagawa S."/>
            <person name="Senoh A."/>
            <person name="Mizoguchi H."/>
            <person name="Goto Y."/>
            <person name="Shimizu F."/>
            <person name="Wakebe H."/>
            <person name="Hishigaki H."/>
            <person name="Watanabe T."/>
            <person name="Sugiyama A."/>
            <person name="Takemoto M."/>
            <person name="Kawakami B."/>
            <person name="Yamazaki M."/>
            <person name="Watanabe K."/>
            <person name="Kumagai A."/>
            <person name="Itakura S."/>
            <person name="Fukuzumi Y."/>
            <person name="Fujimori Y."/>
            <person name="Komiyama M."/>
            <person name="Tashiro H."/>
            <person name="Tanigami A."/>
            <person name="Fujiwara T."/>
            <person name="Ono T."/>
            <person name="Yamada K."/>
            <person name="Fujii Y."/>
            <person name="Ozaki K."/>
            <person name="Hirao M."/>
            <person name="Ohmori Y."/>
            <person name="Kawabata A."/>
            <person name="Hikiji T."/>
            <person name="Kobatake N."/>
            <person name="Inagaki H."/>
            <person name="Ikema Y."/>
            <person name="Okamoto S."/>
            <person name="Okitani R."/>
            <person name="Kawakami T."/>
            <person name="Noguchi S."/>
            <person name="Itoh T."/>
            <person name="Shigeta K."/>
            <person name="Senba T."/>
            <person name="Matsumura K."/>
            <person name="Nakajima Y."/>
            <person name="Mizuno T."/>
            <person name="Morinaga M."/>
            <person name="Sasaki M."/>
            <person name="Togashi T."/>
            <person name="Oyama M."/>
            <person name="Hata H."/>
            <person name="Watanabe M."/>
            <person name="Komatsu T."/>
            <person name="Mizushima-Sugano J."/>
            <person name="Satoh T."/>
            <person name="Shirai Y."/>
            <person name="Takahashi Y."/>
            <person name="Nakagawa K."/>
            <person name="Okumura K."/>
            <person name="Nagase T."/>
            <person name="Nomura N."/>
            <person name="Kikuchi H."/>
            <person name="Masuho Y."/>
            <person name="Yamashita R."/>
            <person name="Nakai K."/>
            <person name="Yada T."/>
            <person name="Nakamura Y."/>
            <person name="Ohara O."/>
            <person name="Isogai T."/>
            <person name="Sugano S."/>
        </authorList>
    </citation>
    <scope>NUCLEOTIDE SEQUENCE [LARGE SCALE MRNA] (ISOFORM 2)</scope>
    <source>
        <tissue>Brain</tissue>
    </source>
</reference>
<reference key="4">
    <citation type="journal article" date="2006" name="Nature">
        <title>The DNA sequence and biological annotation of human chromosome 1.</title>
        <authorList>
            <person name="Gregory S.G."/>
            <person name="Barlow K.F."/>
            <person name="McLay K.E."/>
            <person name="Kaul R."/>
            <person name="Swarbreck D."/>
            <person name="Dunham A."/>
            <person name="Scott C.E."/>
            <person name="Howe K.L."/>
            <person name="Woodfine K."/>
            <person name="Spencer C.C.A."/>
            <person name="Jones M.C."/>
            <person name="Gillson C."/>
            <person name="Searle S."/>
            <person name="Zhou Y."/>
            <person name="Kokocinski F."/>
            <person name="McDonald L."/>
            <person name="Evans R."/>
            <person name="Phillips K."/>
            <person name="Atkinson A."/>
            <person name="Cooper R."/>
            <person name="Jones C."/>
            <person name="Hall R.E."/>
            <person name="Andrews T.D."/>
            <person name="Lloyd C."/>
            <person name="Ainscough R."/>
            <person name="Almeida J.P."/>
            <person name="Ambrose K.D."/>
            <person name="Anderson F."/>
            <person name="Andrew R.W."/>
            <person name="Ashwell R.I.S."/>
            <person name="Aubin K."/>
            <person name="Babbage A.K."/>
            <person name="Bagguley C.L."/>
            <person name="Bailey J."/>
            <person name="Beasley H."/>
            <person name="Bethel G."/>
            <person name="Bird C.P."/>
            <person name="Bray-Allen S."/>
            <person name="Brown J.Y."/>
            <person name="Brown A.J."/>
            <person name="Buckley D."/>
            <person name="Burton J."/>
            <person name="Bye J."/>
            <person name="Carder C."/>
            <person name="Chapman J.C."/>
            <person name="Clark S.Y."/>
            <person name="Clarke G."/>
            <person name="Clee C."/>
            <person name="Cobley V."/>
            <person name="Collier R.E."/>
            <person name="Corby N."/>
            <person name="Coville G.J."/>
            <person name="Davies J."/>
            <person name="Deadman R."/>
            <person name="Dunn M."/>
            <person name="Earthrowl M."/>
            <person name="Ellington A.G."/>
            <person name="Errington H."/>
            <person name="Frankish A."/>
            <person name="Frankland J."/>
            <person name="French L."/>
            <person name="Garner P."/>
            <person name="Garnett J."/>
            <person name="Gay L."/>
            <person name="Ghori M.R.J."/>
            <person name="Gibson R."/>
            <person name="Gilby L.M."/>
            <person name="Gillett W."/>
            <person name="Glithero R.J."/>
            <person name="Grafham D.V."/>
            <person name="Griffiths C."/>
            <person name="Griffiths-Jones S."/>
            <person name="Grocock R."/>
            <person name="Hammond S."/>
            <person name="Harrison E.S.I."/>
            <person name="Hart E."/>
            <person name="Haugen E."/>
            <person name="Heath P.D."/>
            <person name="Holmes S."/>
            <person name="Holt K."/>
            <person name="Howden P.J."/>
            <person name="Hunt A.R."/>
            <person name="Hunt S.E."/>
            <person name="Hunter G."/>
            <person name="Isherwood J."/>
            <person name="James R."/>
            <person name="Johnson C."/>
            <person name="Johnson D."/>
            <person name="Joy A."/>
            <person name="Kay M."/>
            <person name="Kershaw J.K."/>
            <person name="Kibukawa M."/>
            <person name="Kimberley A.M."/>
            <person name="King A."/>
            <person name="Knights A.J."/>
            <person name="Lad H."/>
            <person name="Laird G."/>
            <person name="Lawlor S."/>
            <person name="Leongamornlert D.A."/>
            <person name="Lloyd D.M."/>
            <person name="Loveland J."/>
            <person name="Lovell J."/>
            <person name="Lush M.J."/>
            <person name="Lyne R."/>
            <person name="Martin S."/>
            <person name="Mashreghi-Mohammadi M."/>
            <person name="Matthews L."/>
            <person name="Matthews N.S.W."/>
            <person name="McLaren S."/>
            <person name="Milne S."/>
            <person name="Mistry S."/>
            <person name="Moore M.J.F."/>
            <person name="Nickerson T."/>
            <person name="O'Dell C.N."/>
            <person name="Oliver K."/>
            <person name="Palmeiri A."/>
            <person name="Palmer S.A."/>
            <person name="Parker A."/>
            <person name="Patel D."/>
            <person name="Pearce A.V."/>
            <person name="Peck A.I."/>
            <person name="Pelan S."/>
            <person name="Phelps K."/>
            <person name="Phillimore B.J."/>
            <person name="Plumb R."/>
            <person name="Rajan J."/>
            <person name="Raymond C."/>
            <person name="Rouse G."/>
            <person name="Saenphimmachak C."/>
            <person name="Sehra H.K."/>
            <person name="Sheridan E."/>
            <person name="Shownkeen R."/>
            <person name="Sims S."/>
            <person name="Skuce C.D."/>
            <person name="Smith M."/>
            <person name="Steward C."/>
            <person name="Subramanian S."/>
            <person name="Sycamore N."/>
            <person name="Tracey A."/>
            <person name="Tromans A."/>
            <person name="Van Helmond Z."/>
            <person name="Wall M."/>
            <person name="Wallis J.M."/>
            <person name="White S."/>
            <person name="Whitehead S.L."/>
            <person name="Wilkinson J.E."/>
            <person name="Willey D.L."/>
            <person name="Williams H."/>
            <person name="Wilming L."/>
            <person name="Wray P.W."/>
            <person name="Wu Z."/>
            <person name="Coulson A."/>
            <person name="Vaudin M."/>
            <person name="Sulston J.E."/>
            <person name="Durbin R.M."/>
            <person name="Hubbard T."/>
            <person name="Wooster R."/>
            <person name="Dunham I."/>
            <person name="Carter N.P."/>
            <person name="McVean G."/>
            <person name="Ross M.T."/>
            <person name="Harrow J."/>
            <person name="Olson M.V."/>
            <person name="Beck S."/>
            <person name="Rogers J."/>
            <person name="Bentley D.R."/>
        </authorList>
    </citation>
    <scope>NUCLEOTIDE SEQUENCE [LARGE SCALE GENOMIC DNA]</scope>
</reference>
<reference key="5">
    <citation type="journal article" date="2004" name="Genome Res.">
        <title>The status, quality, and expansion of the NIH full-length cDNA project: the Mammalian Gene Collection (MGC).</title>
        <authorList>
            <consortium name="The MGC Project Team"/>
        </authorList>
    </citation>
    <scope>NUCLEOTIDE SEQUENCE [LARGE SCALE MRNA] (ISOFORM 1)</scope>
    <source>
        <tissue>Brain</tissue>
    </source>
</reference>
<reference key="6">
    <citation type="submission" date="1999-01" db="EMBL/GenBank/DDBJ databases">
        <authorList>
            <person name="Rhodes S."/>
        </authorList>
    </citation>
    <scope>NUCLEOTIDE SEQUENCE [LARGE SCALE MRNA] OF 3-783 (ISOFORM 1)</scope>
</reference>
<reference key="7">
    <citation type="submission" date="1999-02" db="EMBL/GenBank/DDBJ databases">
        <authorList>
            <person name="Mei G."/>
            <person name="Yu W."/>
            <person name="Gibbs R.A."/>
        </authorList>
    </citation>
    <scope>NUCLEOTIDE SEQUENCE [LARGE SCALE MRNA] OF 578-783</scope>
    <source>
        <tissue>Brain</tissue>
    </source>
</reference>
<proteinExistence type="evidence at protein level"/>
<sequence length="783" mass="89005">MRWQCGTRFRGLRPAVAPWTALLALGLPGWVLAVSATAAAVVPEQHASVAGQHPLDWLLTDRGPFHRAQEYADFMERYRQGFTTRYRIYREFARWKVNNLALERKDFFSLPLPLAPEFIRNIRLLGRRPNLQQVTENLIKKYGTHFLLSATLGGEESLTIFVDKQKLGRKTETTGGASIIGGSGNSTAVSLETLHQLAASYFIDRESTLRRLHHIQIATGAIKVTETRTGPLGCSNYDNLDSVSSVLVQSPENKVQLLGLQVLLPEYLRERFVAAALSYITCSSEGELVCKENDCWCKCSPTFPECNCPDADIQAMEDSLLQIQDSWATHNRQFEESEEFQALLKRLPDDRFLNSTAISQFWAMDTSLQHRYQQLGAGLKVLFKKTHRILRRLFNLCKRCHRQPRFRLPKERSLSYWWNRIQSLLYCGESTFPGTFLEQSHSCTCPYDQSSCQGPIPCALGEGPACAHCAPDNSTRCGSCNPGYVLAQGLCRPEVAESLENFLGLETDLQDLELKYLLQKQDSRIEVHSIFISNDMRLGSWFDPSWRKRMLLTLKSNKYKPGLVHVMLALSLQICLTKNSTLEPVMAIYVNPFGGSHSESWFMPVNEGSFPDWERTNVDAAAQCQNWTITLGNRWKTFFETVHVYLRSRIKSLDDSSNETIYYEPLEMTDPSKNLGYMKINTLQVFGYSLPFDPDAIRDLILQLDYPYTQGSQDSALLQLIELRDRVNQLSPPGKVRLDLFSCLLRHRLKLANNEVGRIQSSLRAFNSKLPNPVEYETGKLCS</sequence>
<keyword id="KW-0025">Alternative splicing</keyword>
<keyword id="KW-0131">Cell cycle</keyword>
<keyword id="KW-0325">Glycoprotein</keyword>
<keyword id="KW-0338">Growth arrest</keyword>
<keyword id="KW-1267">Proteomics identification</keyword>
<keyword id="KW-1185">Reference proteome</keyword>
<keyword id="KW-0964">Secreted</keyword>
<keyword id="KW-0732">Signal</keyword>